<organism evidence="19">
    <name type="scientific">Drosophila melanogaster</name>
    <name type="common">Fruit fly</name>
    <dbReference type="NCBI Taxonomy" id="7227"/>
    <lineage>
        <taxon>Eukaryota</taxon>
        <taxon>Metazoa</taxon>
        <taxon>Ecdysozoa</taxon>
        <taxon>Arthropoda</taxon>
        <taxon>Hexapoda</taxon>
        <taxon>Insecta</taxon>
        <taxon>Pterygota</taxon>
        <taxon>Neoptera</taxon>
        <taxon>Endopterygota</taxon>
        <taxon>Diptera</taxon>
        <taxon>Brachycera</taxon>
        <taxon>Muscomorpha</taxon>
        <taxon>Ephydroidea</taxon>
        <taxon>Drosophilidae</taxon>
        <taxon>Drosophila</taxon>
        <taxon>Sophophora</taxon>
    </lineage>
</organism>
<keyword id="KW-0002">3D-structure</keyword>
<keyword id="KW-0025">Alternative splicing</keyword>
<keyword id="KW-0929">Antimicrobial</keyword>
<keyword id="KW-0202">Cytokine</keyword>
<keyword id="KW-0217">Developmental protein</keyword>
<keyword id="KW-0903">Direct protein sequencing</keyword>
<keyword id="KW-1015">Disulfide bond</keyword>
<keyword id="KW-0295">Fungicide</keyword>
<keyword id="KW-0325">Glycoprotein</keyword>
<keyword id="KW-1185">Reference proteome</keyword>
<keyword id="KW-0964">Secreted</keyword>
<keyword id="KW-0732">Signal</keyword>
<accession>P48607</accession>
<accession>Q95SU5</accession>
<accession>Q9VB84</accession>
<sequence length="326" mass="37447">MMTPMWISLFKVLLLLFAFFATYEAKEYERIIKELFTITNDEGVVLFNTSADSAPFMPIPTQHDDPTQKQKQNQNQSPIPETNRHYHQYHSLIQPDQYFKVQRSPNGKLNLVFNDTFVSLQRTDTEVQSEQPIPPRHPSDTFVFPDSPIAKYRPPQSPARPLRNDTKEHNPCAKDESQHLRNFCTNVDDYPDLSGLTHKLKNNFAKFFSNDLQPTDVSSRVGGSDERFLCRSIRKLVYPKKGLRADDTWQLIVNNDEYKQAIQIEECEGADQPCDFAANFPQSYNPICKQHYTQQTLASIKSDGELDVVQNSFKIPSCCKCALKTG</sequence>
<name>SPZ_DROME</name>
<gene>
    <name evidence="18" type="primary">spz</name>
    <name evidence="18" type="ORF">CG6134</name>
</gene>
<feature type="signal peptide">
    <location>
        <begin position="1"/>
        <end position="25"/>
    </location>
</feature>
<feature type="chain" id="PRO_0000022406" description="Protein spaetzle">
    <location>
        <begin position="26"/>
        <end position="326"/>
    </location>
</feature>
<feature type="chain" id="PRO_0000022407" description="Protein spaetzle C-106">
    <location>
        <begin position="221"/>
        <end position="326"/>
    </location>
</feature>
<feature type="domain" description="Spaetzle" evidence="1">
    <location>
        <begin position="228"/>
        <end position="322"/>
    </location>
</feature>
<feature type="region of interest" description="Disordered" evidence="3">
    <location>
        <begin position="56"/>
        <end position="82"/>
    </location>
</feature>
<feature type="region of interest" description="Disordered" evidence="3">
    <location>
        <begin position="152"/>
        <end position="174"/>
    </location>
</feature>
<feature type="compositionally biased region" description="Polar residues" evidence="3">
    <location>
        <begin position="69"/>
        <end position="80"/>
    </location>
</feature>
<feature type="compositionally biased region" description="Basic and acidic residues" evidence="3">
    <location>
        <begin position="162"/>
        <end position="174"/>
    </location>
</feature>
<feature type="site" description="Cleavage; by easter">
    <location>
        <begin position="220"/>
        <end position="221"/>
    </location>
</feature>
<feature type="glycosylation site" description="N-linked (GlcNAc...) asparagine" evidence="2">
    <location>
        <position position="48"/>
    </location>
</feature>
<feature type="glycosylation site" description="N-linked (GlcNAc...) asparagine" evidence="2">
    <location>
        <position position="114"/>
    </location>
</feature>
<feature type="glycosylation site" description="N-linked (GlcNAc...) asparagine" evidence="2">
    <location>
        <position position="164"/>
    </location>
</feature>
<feature type="disulfide bond" evidence="7 16">
    <location>
        <begin position="230"/>
        <end position="288"/>
    </location>
</feature>
<feature type="disulfide bond" evidence="7 16">
    <location>
        <begin position="267"/>
        <end position="319"/>
    </location>
</feature>
<feature type="disulfide bond" evidence="7 16">
    <location>
        <begin position="274"/>
        <end position="321"/>
    </location>
</feature>
<feature type="disulfide bond" description="Interchain" evidence="7 16">
    <location>
        <position position="318"/>
    </location>
</feature>
<feature type="splice variant" id="VSP_004421" description="In isoform 11.5." evidence="17">
    <location>
        <begin position="23"/>
        <end position="185"/>
    </location>
</feature>
<feature type="splice variant" id="VSP_004420" description="In isoform 8.20." evidence="17">
    <location>
        <begin position="23"/>
        <end position="121"/>
    </location>
</feature>
<feature type="splice variant" id="VSP_004419" description="In isoform 8.29." evidence="17">
    <original>YEAKEYERIIKELFTITNDEGVVLFNTSADSAPFMPIPTQHDDPT</original>
    <variation>IVYINIELTKRHEAEVRAEKTVADYKALLATINNGGPGKSASNHL</variation>
    <location>
        <begin position="23"/>
        <end position="67"/>
    </location>
</feature>
<feature type="splice variant" id="VSP_004418" description="In isoform 8.24, isoform 11.32 and isoform 11.6." evidence="14">
    <location>
        <begin position="23"/>
        <end position="48"/>
    </location>
</feature>
<feature type="splice variant" id="VSP_004422" description="In isoform 11.15, isoform 11.27 and isoform 11.7." evidence="17">
    <location>
        <begin position="49"/>
        <end position="121"/>
    </location>
</feature>
<feature type="splice variant" id="VSP_004423" description="In isoform 11.32." evidence="17">
    <location>
        <begin position="65"/>
        <end position="189"/>
    </location>
</feature>
<feature type="splice variant" id="VSP_004424" description="In isoform 8.29." evidence="17">
    <location>
        <begin position="68"/>
        <end position="120"/>
    </location>
</feature>
<feature type="splice variant" id="VSP_004425" description="In isoform 8.24." evidence="17">
    <location>
        <begin position="101"/>
        <end position="121"/>
    </location>
</feature>
<feature type="splice variant" id="VSP_010257" description="In isoform 11.15." evidence="17">
    <location>
        <begin position="142"/>
        <end position="151"/>
    </location>
</feature>
<feature type="splice variant" id="VSP_004426" description="In isoform 11.27." evidence="17">
    <location>
        <begin position="189"/>
        <end position="225"/>
    </location>
</feature>
<feature type="splice variant" id="VSP_004427" description="In isoform 8.24." evidence="17">
    <original>THKLKNNFAKFFSNDLQPTDVSSRVGGSDE</original>
    <variation>RRAIPLQEHQEAGVPKKGLEGGRHLAVNCQ</variation>
    <location>
        <begin position="197"/>
        <end position="226"/>
    </location>
</feature>
<feature type="splice variant" id="VSP_004428" description="In isoform 8.24." evidence="17">
    <location>
        <begin position="227"/>
        <end position="326"/>
    </location>
</feature>
<feature type="mutagenesis site" description="Not cleaved when expressed with activated SPE." evidence="6">
    <original>RV</original>
    <variation>LN</variation>
    <location>
        <begin position="220"/>
        <end position="221"/>
    </location>
</feature>
<feature type="mutagenesis site" description="Abolishes signaling almost completely." evidence="9">
    <original>RK</original>
    <variation>AA</variation>
    <location>
        <begin position="234"/>
        <end position="235"/>
    </location>
</feature>
<feature type="mutagenesis site" description="Strongly reduced signaling." evidence="9">
    <original>D</original>
    <variation>R</variation>
    <location>
        <position position="275"/>
    </location>
</feature>
<feature type="mutagenesis site" description="Reduced phenotypic rescue of a mutant." evidence="13">
    <original>C</original>
    <variation>S</variation>
    <variation>T</variation>
    <location>
        <position position="318"/>
    </location>
</feature>
<feature type="sequence conflict" description="In Ref. 2; AAF98130." evidence="17" ref="2">
    <original>S</original>
    <variation>T</variation>
    <location>
        <position position="50"/>
    </location>
</feature>
<feature type="sequence conflict" description="In Ref. 2; AAF98124." evidence="17" ref="2">
    <original>S</original>
    <variation>T</variation>
    <location>
        <position position="53"/>
    </location>
</feature>
<feature type="sequence conflict" description="In Ref. 5; AAL25517." evidence="17" ref="5">
    <original>T</original>
    <variation>P</variation>
    <location>
        <position position="67"/>
    </location>
</feature>
<feature type="sequence conflict" description="In Ref. 2; AAF98130/AAF98131/AAF98126." evidence="17" ref="2">
    <original>N</original>
    <variation>D</variation>
    <location>
        <position position="75"/>
    </location>
</feature>
<feature type="sequence conflict" description="In Ref. 2; AAF98132." evidence="17" ref="2">
    <original>S</original>
    <variation>F</variation>
    <location>
        <position position="147"/>
    </location>
</feature>
<feature type="sequence conflict" description="In Ref. 2; AAF98129." evidence="17" ref="2">
    <original>R</original>
    <variation>T</variation>
    <location>
        <position position="163"/>
    </location>
</feature>
<feature type="sequence conflict" description="In Ref. 2; AAF98129." evidence="17" ref="2">
    <original>C</original>
    <variation>S</variation>
    <location>
        <position position="172"/>
    </location>
</feature>
<feature type="sequence conflict" description="In Ref. 2; AAF98125." evidence="17" ref="2">
    <original>T</original>
    <variation>R</variation>
    <location>
        <position position="197"/>
    </location>
</feature>
<feature type="sequence conflict" description="In Ref. 2; AAF98129." evidence="17" ref="2">
    <original>K</original>
    <variation>N</variation>
    <location>
        <position position="206"/>
    </location>
</feature>
<feature type="strand" evidence="20">
    <location>
        <begin position="227"/>
        <end position="230"/>
    </location>
</feature>
<feature type="strand" evidence="21">
    <location>
        <begin position="232"/>
        <end position="236"/>
    </location>
</feature>
<feature type="strand" evidence="21">
    <location>
        <begin position="263"/>
        <end position="269"/>
    </location>
</feature>
<feature type="helix" evidence="21">
    <location>
        <begin position="277"/>
        <end position="279"/>
    </location>
</feature>
<feature type="strand" evidence="21">
    <location>
        <begin position="285"/>
        <end position="293"/>
    </location>
</feature>
<feature type="strand" evidence="20">
    <location>
        <begin position="296"/>
        <end position="300"/>
    </location>
</feature>
<feature type="strand" evidence="20">
    <location>
        <begin position="306"/>
        <end position="309"/>
    </location>
</feature>
<feature type="strand" evidence="21">
    <location>
        <begin position="315"/>
        <end position="325"/>
    </location>
</feature>
<evidence type="ECO:0000255" key="1"/>
<evidence type="ECO:0000255" key="2">
    <source>
        <dbReference type="PROSITE-ProRule" id="PRU00498"/>
    </source>
</evidence>
<evidence type="ECO:0000256" key="3">
    <source>
        <dbReference type="SAM" id="MobiDB-lite"/>
    </source>
</evidence>
<evidence type="ECO:0000269" key="4">
    <source>
    </source>
</evidence>
<evidence type="ECO:0000269" key="5">
    <source>
    </source>
</evidence>
<evidence type="ECO:0000269" key="6">
    <source>
    </source>
</evidence>
<evidence type="ECO:0000269" key="7">
    <source>
    </source>
</evidence>
<evidence type="ECO:0000269" key="8">
    <source>
    </source>
</evidence>
<evidence type="ECO:0000269" key="9">
    <source>
    </source>
</evidence>
<evidence type="ECO:0000269" key="10">
    <source>
    </source>
</evidence>
<evidence type="ECO:0000269" key="11">
    <source>
    </source>
</evidence>
<evidence type="ECO:0000269" key="12">
    <source>
    </source>
</evidence>
<evidence type="ECO:0000269" key="13">
    <source>
    </source>
</evidence>
<evidence type="ECO:0000303" key="14">
    <source>
    </source>
</evidence>
<evidence type="ECO:0000303" key="15">
    <source>
    </source>
</evidence>
<evidence type="ECO:0000303" key="16">
    <source>
    </source>
</evidence>
<evidence type="ECO:0000305" key="17"/>
<evidence type="ECO:0000312" key="18">
    <source>
        <dbReference type="FlyBase" id="FBgn0003495"/>
    </source>
</evidence>
<evidence type="ECO:0000312" key="19">
    <source>
        <dbReference type="Proteomes" id="UP000000803"/>
    </source>
</evidence>
<evidence type="ECO:0007829" key="20">
    <source>
        <dbReference type="PDB" id="3E07"/>
    </source>
</evidence>
<evidence type="ECO:0007829" key="21">
    <source>
        <dbReference type="PDB" id="4LXR"/>
    </source>
</evidence>
<dbReference type="EMBL" id="U05850">
    <property type="protein sequence ID" value="AAA17887.1"/>
    <property type="molecule type" value="Unassigned_DNA"/>
</dbReference>
<dbReference type="EMBL" id="AF237964">
    <property type="protein sequence ID" value="AAF98123.1"/>
    <property type="molecule type" value="mRNA"/>
</dbReference>
<dbReference type="EMBL" id="AF237965">
    <property type="protein sequence ID" value="AAF98124.1"/>
    <property type="molecule type" value="mRNA"/>
</dbReference>
<dbReference type="EMBL" id="AF237966">
    <property type="protein sequence ID" value="AAF98125.1"/>
    <property type="molecule type" value="mRNA"/>
</dbReference>
<dbReference type="EMBL" id="AF237967">
    <property type="protein sequence ID" value="AAF98126.1"/>
    <property type="molecule type" value="mRNA"/>
</dbReference>
<dbReference type="EMBL" id="AF237968">
    <property type="protein sequence ID" value="AAF98127.1"/>
    <property type="molecule type" value="mRNA"/>
</dbReference>
<dbReference type="EMBL" id="AF237969">
    <property type="protein sequence ID" value="AAF98128.1"/>
    <property type="molecule type" value="mRNA"/>
</dbReference>
<dbReference type="EMBL" id="AF237970">
    <property type="protein sequence ID" value="AAF98129.1"/>
    <property type="molecule type" value="mRNA"/>
</dbReference>
<dbReference type="EMBL" id="AF237971">
    <property type="protein sequence ID" value="AAF98130.1"/>
    <property type="molecule type" value="mRNA"/>
</dbReference>
<dbReference type="EMBL" id="AF237972">
    <property type="protein sequence ID" value="AAF98131.1"/>
    <property type="molecule type" value="mRNA"/>
</dbReference>
<dbReference type="EMBL" id="AF237973">
    <property type="protein sequence ID" value="AAF98132.1"/>
    <property type="molecule type" value="mRNA"/>
</dbReference>
<dbReference type="EMBL" id="AF237974">
    <property type="protein sequence ID" value="AAF82745.1"/>
    <property type="molecule type" value="Genomic_DNA"/>
</dbReference>
<dbReference type="EMBL" id="AE014297">
    <property type="protein sequence ID" value="AAF56658.1"/>
    <property type="molecule type" value="Genomic_DNA"/>
</dbReference>
<dbReference type="EMBL" id="AE014297">
    <property type="protein sequence ID" value="AAN14388.1"/>
    <property type="molecule type" value="Genomic_DNA"/>
</dbReference>
<dbReference type="EMBL" id="AE014297">
    <property type="protein sequence ID" value="AAN14391.1"/>
    <property type="molecule type" value="Genomic_DNA"/>
</dbReference>
<dbReference type="EMBL" id="AE014297">
    <property type="protein sequence ID" value="AAN14394.1"/>
    <property type="molecule type" value="Genomic_DNA"/>
</dbReference>
<dbReference type="EMBL" id="AE014297">
    <property type="protein sequence ID" value="AAN14395.1"/>
    <property type="molecule type" value="Genomic_DNA"/>
</dbReference>
<dbReference type="EMBL" id="AY060478">
    <property type="protein sequence ID" value="AAL25517.1"/>
    <property type="molecule type" value="mRNA"/>
</dbReference>
<dbReference type="PIR" id="A53190">
    <property type="entry name" value="A53190"/>
</dbReference>
<dbReference type="RefSeq" id="NP_524526.1">
    <molecule id="P48607-1"/>
    <property type="nucleotide sequence ID" value="NM_079802.3"/>
</dbReference>
<dbReference type="RefSeq" id="NP_733188.1">
    <molecule id="P48607-2"/>
    <property type="nucleotide sequence ID" value="NM_170309.2"/>
</dbReference>
<dbReference type="RefSeq" id="NP_733191.1">
    <molecule id="P48607-3"/>
    <property type="nucleotide sequence ID" value="NM_170312.2"/>
</dbReference>
<dbReference type="RefSeq" id="NP_733194.1">
    <molecule id="P48607-9"/>
    <property type="nucleotide sequence ID" value="NM_170315.2"/>
</dbReference>
<dbReference type="RefSeq" id="NP_733195.1">
    <molecule id="P48607-5"/>
    <property type="nucleotide sequence ID" value="NM_170316.2"/>
</dbReference>
<dbReference type="PDB" id="3E07">
    <property type="method" value="X-ray"/>
    <property type="resolution" value="2.40 A"/>
    <property type="chains" value="A/B=221-326"/>
</dbReference>
<dbReference type="PDB" id="4BV4">
    <property type="method" value="X-ray"/>
    <property type="resolution" value="2.35 A"/>
    <property type="chains" value="L/M=221-326"/>
</dbReference>
<dbReference type="PDB" id="4LXR">
    <property type="method" value="X-ray"/>
    <property type="resolution" value="2.20 A"/>
    <property type="chains" value="J/K=221-326"/>
</dbReference>
<dbReference type="PDB" id="4LXS">
    <property type="method" value="X-ray"/>
    <property type="resolution" value="3.30 A"/>
    <property type="chains" value="J/K=221-326"/>
</dbReference>
<dbReference type="PDBsum" id="3E07"/>
<dbReference type="PDBsum" id="4BV4"/>
<dbReference type="PDBsum" id="4LXR"/>
<dbReference type="PDBsum" id="4LXS"/>
<dbReference type="SMR" id="P48607"/>
<dbReference type="BioGRID" id="68145">
    <property type="interactions" value="18"/>
</dbReference>
<dbReference type="ComplexPortal" id="CPX-3140">
    <property type="entry name" value="Spaetzle complex"/>
</dbReference>
<dbReference type="DIP" id="DIP-23237N"/>
<dbReference type="FunCoup" id="P48607">
    <property type="interactions" value="118"/>
</dbReference>
<dbReference type="IntAct" id="P48607">
    <property type="interactions" value="2"/>
</dbReference>
<dbReference type="STRING" id="7227.FBpp0084507"/>
<dbReference type="GlyCosmos" id="P48607">
    <property type="glycosylation" value="3 sites, No reported glycans"/>
</dbReference>
<dbReference type="GlyGen" id="P48607">
    <property type="glycosylation" value="3 sites"/>
</dbReference>
<dbReference type="PaxDb" id="7227-FBpp0084507"/>
<dbReference type="PeptideAtlas" id="P48607"/>
<dbReference type="DNASU" id="43256"/>
<dbReference type="EnsemblMetazoa" id="FBtr0085137">
    <molecule id="P48607-1"/>
    <property type="protein sequence ID" value="FBpp0084507"/>
    <property type="gene ID" value="FBgn0003495"/>
</dbReference>
<dbReference type="EnsemblMetazoa" id="FBtr0085138">
    <molecule id="P48607-3"/>
    <property type="protein sequence ID" value="FBpp0084508"/>
    <property type="gene ID" value="FBgn0003495"/>
</dbReference>
<dbReference type="EnsemblMetazoa" id="FBtr0085139">
    <molecule id="P48607-9"/>
    <property type="protein sequence ID" value="FBpp0084509"/>
    <property type="gene ID" value="FBgn0003495"/>
</dbReference>
<dbReference type="EnsemblMetazoa" id="FBtr0085140">
    <molecule id="P48607-5"/>
    <property type="protein sequence ID" value="FBpp0084510"/>
    <property type="gene ID" value="FBgn0003495"/>
</dbReference>
<dbReference type="EnsemblMetazoa" id="FBtr0085145">
    <molecule id="P48607-2"/>
    <property type="protein sequence ID" value="FBpp0084515"/>
    <property type="gene ID" value="FBgn0003495"/>
</dbReference>
<dbReference type="GeneID" id="43256"/>
<dbReference type="KEGG" id="dme:Dmel_CG6134"/>
<dbReference type="UCSC" id="CG6134-RA">
    <molecule id="P48607-1"/>
    <property type="organism name" value="d. melanogaster"/>
</dbReference>
<dbReference type="AGR" id="FB:FBgn0003495"/>
<dbReference type="CTD" id="43256"/>
<dbReference type="FlyBase" id="FBgn0003495">
    <property type="gene designation" value="spz"/>
</dbReference>
<dbReference type="VEuPathDB" id="VectorBase:FBgn0003495"/>
<dbReference type="eggNOG" id="ENOG502S688">
    <property type="taxonomic scope" value="Eukaryota"/>
</dbReference>
<dbReference type="GeneTree" id="ENSGT00700000106225"/>
<dbReference type="InParanoid" id="P48607"/>
<dbReference type="OrthoDB" id="6359065at2759"/>
<dbReference type="PhylomeDB" id="P48607"/>
<dbReference type="Reactome" id="R-DME-209442">
    <property type="pathway name" value="Formation of the trans-membrane 'signalling complex'"/>
</dbReference>
<dbReference type="Reactome" id="R-DME-214842">
    <property type="pathway name" value="DL and DIF homodimers bind to TUB and phosphorylated PLL in the TL receptor 'signalling complex'"/>
</dbReference>
<dbReference type="Reactome" id="R-DME-214844">
    <property type="pathway name" value="DL and DIF homodimers complexed with CACT are all phosphorylated in the TL receptor 'signalling complex'"/>
</dbReference>
<dbReference type="Reactome" id="R-DME-214862">
    <property type="pathway name" value="Activated PLL kinase is autophosphorylated in the TL receptor 'signalling complex'"/>
</dbReference>
<dbReference type="Reactome" id="R-DME-214863">
    <property type="pathway name" value="Adaptor protein complex binds to TL receptor at the plasma membrane"/>
</dbReference>
<dbReference type="Reactome" id="R-DME-214869">
    <property type="pathway name" value="Phosphorylated CACT, DL and DIF homodimers dissociate from the TL receptor 'signalling complex'"/>
</dbReference>
<dbReference type="Reactome" id="R-DME-214874">
    <property type="pathway name" value="PLL kinase binds to TUB in the TL receptor 'signalling complex'"/>
</dbReference>
<dbReference type="SignaLink" id="P48607"/>
<dbReference type="BioGRID-ORCS" id="43256">
    <property type="hits" value="0 hits in 1 CRISPR screen"/>
</dbReference>
<dbReference type="EvolutionaryTrace" id="P48607"/>
<dbReference type="GenomeRNAi" id="43256"/>
<dbReference type="PRO" id="PR:P48607"/>
<dbReference type="Proteomes" id="UP000000803">
    <property type="component" value="Chromosome 3R"/>
</dbReference>
<dbReference type="Bgee" id="FBgn0003495">
    <property type="expression patterns" value="Expressed in embryonic/larval hemocyte (Drosophila) and 140 other cell types or tissues"/>
</dbReference>
<dbReference type="ExpressionAtlas" id="P48607">
    <property type="expression patterns" value="baseline and differential"/>
</dbReference>
<dbReference type="GO" id="GO:0005576">
    <property type="term" value="C:extracellular region"/>
    <property type="evidence" value="ECO:0000314"/>
    <property type="project" value="UniProtKB"/>
</dbReference>
<dbReference type="GO" id="GO:0005615">
    <property type="term" value="C:extracellular space"/>
    <property type="evidence" value="ECO:0000314"/>
    <property type="project" value="FlyBase"/>
</dbReference>
<dbReference type="GO" id="GO:0005125">
    <property type="term" value="F:cytokine activity"/>
    <property type="evidence" value="ECO:0000304"/>
    <property type="project" value="FlyBase"/>
</dbReference>
<dbReference type="GO" id="GO:0008083">
    <property type="term" value="F:growth factor activity"/>
    <property type="evidence" value="ECO:0000315"/>
    <property type="project" value="FlyBase"/>
</dbReference>
<dbReference type="GO" id="GO:0042803">
    <property type="term" value="F:protein homodimerization activity"/>
    <property type="evidence" value="ECO:0000314"/>
    <property type="project" value="FlyBase"/>
</dbReference>
<dbReference type="GO" id="GO:0048018">
    <property type="term" value="F:receptor ligand activity"/>
    <property type="evidence" value="ECO:0000314"/>
    <property type="project" value="FlyBase"/>
</dbReference>
<dbReference type="GO" id="GO:0005121">
    <property type="term" value="F:Toll binding"/>
    <property type="evidence" value="ECO:0000314"/>
    <property type="project" value="FlyBase"/>
</dbReference>
<dbReference type="GO" id="GO:0061760">
    <property type="term" value="P:antifungal innate immune response"/>
    <property type="evidence" value="ECO:0000314"/>
    <property type="project" value="FlyBase"/>
</dbReference>
<dbReference type="GO" id="GO:0035212">
    <property type="term" value="P:cell competition in a multicellular organism"/>
    <property type="evidence" value="ECO:0000315"/>
    <property type="project" value="FlyBase"/>
</dbReference>
<dbReference type="GO" id="GO:0021556">
    <property type="term" value="P:central nervous system formation"/>
    <property type="evidence" value="ECO:0000318"/>
    <property type="project" value="GO_Central"/>
</dbReference>
<dbReference type="GO" id="GO:0050832">
    <property type="term" value="P:defense response to fungus"/>
    <property type="evidence" value="ECO:0000315"/>
    <property type="project" value="UniProtKB"/>
</dbReference>
<dbReference type="GO" id="GO:0050829">
    <property type="term" value="P:defense response to Gram-negative bacterium"/>
    <property type="evidence" value="ECO:0000315"/>
    <property type="project" value="UniProtKB"/>
</dbReference>
<dbReference type="GO" id="GO:0050830">
    <property type="term" value="P:defense response to Gram-positive bacterium"/>
    <property type="evidence" value="ECO:0000314"/>
    <property type="project" value="FlyBase"/>
</dbReference>
<dbReference type="GO" id="GO:0009950">
    <property type="term" value="P:dorsal/ventral axis specification"/>
    <property type="evidence" value="ECO:0000314"/>
    <property type="project" value="FlyBase"/>
</dbReference>
<dbReference type="GO" id="GO:0009953">
    <property type="term" value="P:dorsal/ventral pattern formation"/>
    <property type="evidence" value="ECO:0000314"/>
    <property type="project" value="FlyBase"/>
</dbReference>
<dbReference type="GO" id="GO:0045087">
    <property type="term" value="P:innate immune response"/>
    <property type="evidence" value="ECO:0000314"/>
    <property type="project" value="FlyBase"/>
</dbReference>
<dbReference type="GO" id="GO:0031640">
    <property type="term" value="P:killing of cells of another organism"/>
    <property type="evidence" value="ECO:0007669"/>
    <property type="project" value="UniProtKB-KW"/>
</dbReference>
<dbReference type="GO" id="GO:0007526">
    <property type="term" value="P:larval somatic muscle development"/>
    <property type="evidence" value="ECO:0000315"/>
    <property type="project" value="FlyBase"/>
</dbReference>
<dbReference type="GO" id="GO:0008045">
    <property type="term" value="P:motor neuron axon guidance"/>
    <property type="evidence" value="ECO:0000315"/>
    <property type="project" value="FlyBase"/>
</dbReference>
<dbReference type="GO" id="GO:0043524">
    <property type="term" value="P:negative regulation of neuron apoptotic process"/>
    <property type="evidence" value="ECO:0000315"/>
    <property type="project" value="FlyBase"/>
</dbReference>
<dbReference type="GO" id="GO:0007310">
    <property type="term" value="P:oocyte dorsal/ventral axis specification"/>
    <property type="evidence" value="ECO:0000270"/>
    <property type="project" value="UniProtKB"/>
</dbReference>
<dbReference type="GO" id="GO:0006967">
    <property type="term" value="P:positive regulation of antifungal peptide biosynthetic process"/>
    <property type="evidence" value="ECO:0000315"/>
    <property type="project" value="FlyBase"/>
</dbReference>
<dbReference type="GO" id="GO:0002804">
    <property type="term" value="P:positive regulation of antifungal peptide production"/>
    <property type="evidence" value="ECO:0000315"/>
    <property type="project" value="FlyBase"/>
</dbReference>
<dbReference type="GO" id="GO:0002807">
    <property type="term" value="P:positive regulation of antimicrobial peptide biosynthetic process"/>
    <property type="evidence" value="ECO:0000314"/>
    <property type="project" value="FlyBase"/>
</dbReference>
<dbReference type="GO" id="GO:0002225">
    <property type="term" value="P:positive regulation of antimicrobial peptide production"/>
    <property type="evidence" value="ECO:0000316"/>
    <property type="project" value="UniProtKB"/>
</dbReference>
<dbReference type="GO" id="GO:0006965">
    <property type="term" value="P:positive regulation of biosynthetic process of antibacterial peptides active against Gram-positive bacteria"/>
    <property type="evidence" value="ECO:0000315"/>
    <property type="project" value="UniProtKB"/>
</dbReference>
<dbReference type="GO" id="GO:0010628">
    <property type="term" value="P:positive regulation of gene expression"/>
    <property type="evidence" value="ECO:0000315"/>
    <property type="project" value="UniProtKB"/>
</dbReference>
<dbReference type="GO" id="GO:0042542">
    <property type="term" value="P:response to hydrogen peroxide"/>
    <property type="evidence" value="ECO:0000314"/>
    <property type="project" value="FlyBase"/>
</dbReference>
<dbReference type="GO" id="GO:0002347">
    <property type="term" value="P:response to tumor cell"/>
    <property type="evidence" value="ECO:0000315"/>
    <property type="project" value="FlyBase"/>
</dbReference>
<dbReference type="GO" id="GO:0009611">
    <property type="term" value="P:response to wounding"/>
    <property type="evidence" value="ECO:0000270"/>
    <property type="project" value="FlyBase"/>
</dbReference>
<dbReference type="GO" id="GO:0008063">
    <property type="term" value="P:Toll signaling pathway"/>
    <property type="evidence" value="ECO:0000314"/>
    <property type="project" value="FlyBase"/>
</dbReference>
<dbReference type="FunFam" id="2.10.90.10:FF:000056">
    <property type="entry name" value="Protein spaetzle"/>
    <property type="match status" value="1"/>
</dbReference>
<dbReference type="Gene3D" id="2.10.90.10">
    <property type="entry name" value="Cystine-knot cytokines"/>
    <property type="match status" value="1"/>
</dbReference>
<dbReference type="InterPro" id="IPR029034">
    <property type="entry name" value="Cystine-knot_cytokine"/>
</dbReference>
<dbReference type="InterPro" id="IPR032104">
    <property type="entry name" value="Spaetzle"/>
</dbReference>
<dbReference type="InterPro" id="IPR052444">
    <property type="entry name" value="Spz/Toll_ligand-like"/>
</dbReference>
<dbReference type="PANTHER" id="PTHR23199">
    <property type="entry name" value="NEUROTROPHIN 1-RELATED"/>
    <property type="match status" value="1"/>
</dbReference>
<dbReference type="PANTHER" id="PTHR23199:SF12">
    <property type="entry name" value="NEUROTROPHIN 1-RELATED"/>
    <property type="match status" value="1"/>
</dbReference>
<dbReference type="Pfam" id="PF16077">
    <property type="entry name" value="Spaetzle"/>
    <property type="match status" value="1"/>
</dbReference>
<dbReference type="SUPFAM" id="SSF57501">
    <property type="entry name" value="Cystine-knot cytokines"/>
    <property type="match status" value="1"/>
</dbReference>
<comment type="function">
    <text evidence="4 5 11 12">The activated form, spaetzle C-106, acts as a ligand for the Toll receptor (PubMed:12872120). Binding to Toll activates the Toll signaling pathway and induces expression of the antifungal peptide drosomycin (PubMed:8808632). Component of the extracellular signaling pathway that establishes dorsal-ventral polarity in the embryo (PubMed:11212919, PubMed:8124709).</text>
</comment>
<comment type="subunit">
    <text evidence="5 9 10 13 15">Homodimer; disulfide-linked (PubMed:12872120, PubMed:9533958). In the presence of Tl, crystal structures show one Tl molecule bound to a spaetzle C-106 homodimer (PubMed:24282309, PubMed:24733933). However, the active complex probably consists of two Tl molecules bound to a spaetzle C-106 homodimer (PubMed:24282309, PubMed:24733933). This is supported by in vitro experiments which also show binding of the spaetzle C-106 dimer to 2 Tl receptors (PubMed:12872120). Ligand binding induces conformational changes in the extracellular domain of Tl (PubMed:24282309). This may enable a secondary homodimerization interface at the C-terminus of the Tl extracellular domain (PubMed:24282309).</text>
</comment>
<comment type="subcellular location">
    <molecule>Isoform 8.19</molecule>
    <subcellularLocation>
        <location>Secreted</location>
    </subcellularLocation>
    <text>Secreted in a cell culture system.</text>
</comment>
<comment type="subcellular location">
    <molecule>Isoform 8.29</molecule>
    <subcellularLocation>
        <location>Secreted</location>
    </subcellularLocation>
    <text>Secreted in a cell culture system.</text>
</comment>
<comment type="subcellular location">
    <molecule>Isoform 11.15</molecule>
    <subcellularLocation>
        <location>Secreted</location>
    </subcellularLocation>
    <text>Secreted in a cell culture system.</text>
</comment>
<comment type="subcellular location">
    <molecule>Isoform 11.6</molecule>
    <subcellularLocation>
        <location>Secreted</location>
    </subcellularLocation>
    <text>Secreted in a cell culture system.</text>
</comment>
<comment type="subcellular location">
    <molecule>Isoform 11.7</molecule>
    <subcellularLocation>
        <location>Secreted</location>
    </subcellularLocation>
    <text>Secreted in a cell culture system.</text>
</comment>
<comment type="alternative products">
    <event type="alternative splicing"/>
    <isoform>
        <id>P48607-1</id>
        <name>8.19</name>
        <name>A</name>
        <sequence type="displayed"/>
    </isoform>
    <isoform>
        <id>P48607-2</id>
        <name>8.20</name>
        <name>I</name>
        <sequence type="described" ref="VSP_004420"/>
    </isoform>
    <isoform>
        <id>P48607-4</id>
        <name>8.24</name>
        <sequence type="described" ref="VSP_004418 VSP_004425 VSP_004427 VSP_004428"/>
    </isoform>
    <isoform>
        <id>P48607-5</id>
        <name>8.29</name>
        <name>D</name>
        <sequence type="described" ref="VSP_004419 VSP_004424"/>
    </isoform>
    <isoform>
        <id>P48607-10</id>
        <name>11.15</name>
        <sequence type="described" ref="VSP_004422 VSP_010257"/>
    </isoform>
    <isoform>
        <id>P48607-6</id>
        <name>11.27</name>
        <sequence type="described" ref="VSP_004422 VSP_004426"/>
    </isoform>
    <isoform>
        <id>P48607-7</id>
        <name>11.32</name>
        <sequence type="described" ref="VSP_004418 VSP_004423"/>
    </isoform>
    <isoform>
        <id>P48607-8</id>
        <name>11.5</name>
        <sequence type="described" ref="VSP_004421"/>
    </isoform>
    <isoform>
        <id>P48607-3</id>
        <name>11.6</name>
        <name>B</name>
        <name>8.23</name>
        <sequence type="described" ref="VSP_004418"/>
    </isoform>
    <isoform>
        <id>P48607-9</id>
        <name>11.7</name>
        <name>C</name>
        <name>23 kDa</name>
        <sequence type="described" ref="VSP_004422"/>
    </isoform>
</comment>
<comment type="developmental stage">
    <text evidence="11">Expressed both maternally and zygotically. All isoforms, except isoform 8.20, are rapidly degraded on cellularisation of the blastoderm embryo.</text>
</comment>
<comment type="PTM">
    <text evidence="6 8 13">During embryonic development proteolytically processed by activated ea/easter; ea cleaves the signal peptide and also generates the C-terminal 12 kDa active ligand for the Toll receptor, C-106 (except for isoform 8.24 and isoform 11.27 as they do not contain the cleavage site) (PubMed:20605458, PubMed:9533958). During the immune response, cleaved in the same manner by SPE (PubMed:16399077).</text>
</comment>
<comment type="PTM">
    <text>Extracellular forms of isoform 8.19 and isoform 11.7 are glycosylated.</text>
</comment>
<comment type="miscellaneous">
    <text>'Spaetzle' means 'noodles' in German.</text>
</comment>
<proteinExistence type="evidence at protein level"/>
<reference key="1">
    <citation type="journal article" date="1994" name="Cell">
        <title>The spatzle gene encodes a component of the extracellular signaling pathway establishing the dorsal-ventral pattern of the Drosophila embryo.</title>
        <authorList>
            <person name="Morisato D."/>
            <person name="Anderson K.V."/>
        </authorList>
    </citation>
    <scope>NUCLEOTIDE SEQUENCE (ISOFORM 11.7)</scope>
    <scope>FUNCTION</scope>
    <scope>SUBCELLULAR LOCATION</scope>
    <scope>DEVELOPMENTAL STAGE</scope>
    <source>
        <tissue>Embryo</tissue>
    </source>
</reference>
<reference key="2">
    <citation type="journal article" date="2001" name="Mol. Gen. Genet.">
        <title>Multiple isoforms of the Drosophila spatzle protein are encoded by alternatively spliced maternal mRNAs in the precellular blastoderm embryo.</title>
        <authorList>
            <person name="DeLotto Y."/>
            <person name="Smith C."/>
            <person name="DeLotto R."/>
        </authorList>
    </citation>
    <scope>NUCLEOTIDE SEQUENCE [GENOMIC DNA / MRNA]</scope>
    <scope>ALTERNATIVE SPLICING</scope>
    <scope>FUNCTION</scope>
    <scope>SUBCELLULAR LOCATION</scope>
    <source>
        <strain>Oregon-R</strain>
        <tissue>Embryo</tissue>
    </source>
</reference>
<reference key="3">
    <citation type="journal article" date="2000" name="Science">
        <title>The genome sequence of Drosophila melanogaster.</title>
        <authorList>
            <person name="Adams M.D."/>
            <person name="Celniker S.E."/>
            <person name="Holt R.A."/>
            <person name="Evans C.A."/>
            <person name="Gocayne J.D."/>
            <person name="Amanatides P.G."/>
            <person name="Scherer S.E."/>
            <person name="Li P.W."/>
            <person name="Hoskins R.A."/>
            <person name="Galle R.F."/>
            <person name="George R.A."/>
            <person name="Lewis S.E."/>
            <person name="Richards S."/>
            <person name="Ashburner M."/>
            <person name="Henderson S.N."/>
            <person name="Sutton G.G."/>
            <person name="Wortman J.R."/>
            <person name="Yandell M.D."/>
            <person name="Zhang Q."/>
            <person name="Chen L.X."/>
            <person name="Brandon R.C."/>
            <person name="Rogers Y.-H.C."/>
            <person name="Blazej R.G."/>
            <person name="Champe M."/>
            <person name="Pfeiffer B.D."/>
            <person name="Wan K.H."/>
            <person name="Doyle C."/>
            <person name="Baxter E.G."/>
            <person name="Helt G."/>
            <person name="Nelson C.R."/>
            <person name="Miklos G.L.G."/>
            <person name="Abril J.F."/>
            <person name="Agbayani A."/>
            <person name="An H.-J."/>
            <person name="Andrews-Pfannkoch C."/>
            <person name="Baldwin D."/>
            <person name="Ballew R.M."/>
            <person name="Basu A."/>
            <person name="Baxendale J."/>
            <person name="Bayraktaroglu L."/>
            <person name="Beasley E.M."/>
            <person name="Beeson K.Y."/>
            <person name="Benos P.V."/>
            <person name="Berman B.P."/>
            <person name="Bhandari D."/>
            <person name="Bolshakov S."/>
            <person name="Borkova D."/>
            <person name="Botchan M.R."/>
            <person name="Bouck J."/>
            <person name="Brokstein P."/>
            <person name="Brottier P."/>
            <person name="Burtis K.C."/>
            <person name="Busam D.A."/>
            <person name="Butler H."/>
            <person name="Cadieu E."/>
            <person name="Center A."/>
            <person name="Chandra I."/>
            <person name="Cherry J.M."/>
            <person name="Cawley S."/>
            <person name="Dahlke C."/>
            <person name="Davenport L.B."/>
            <person name="Davies P."/>
            <person name="de Pablos B."/>
            <person name="Delcher A."/>
            <person name="Deng Z."/>
            <person name="Mays A.D."/>
            <person name="Dew I."/>
            <person name="Dietz S.M."/>
            <person name="Dodson K."/>
            <person name="Doup L.E."/>
            <person name="Downes M."/>
            <person name="Dugan-Rocha S."/>
            <person name="Dunkov B.C."/>
            <person name="Dunn P."/>
            <person name="Durbin K.J."/>
            <person name="Evangelista C.C."/>
            <person name="Ferraz C."/>
            <person name="Ferriera S."/>
            <person name="Fleischmann W."/>
            <person name="Fosler C."/>
            <person name="Gabrielian A.E."/>
            <person name="Garg N.S."/>
            <person name="Gelbart W.M."/>
            <person name="Glasser K."/>
            <person name="Glodek A."/>
            <person name="Gong F."/>
            <person name="Gorrell J.H."/>
            <person name="Gu Z."/>
            <person name="Guan P."/>
            <person name="Harris M."/>
            <person name="Harris N.L."/>
            <person name="Harvey D.A."/>
            <person name="Heiman T.J."/>
            <person name="Hernandez J.R."/>
            <person name="Houck J."/>
            <person name="Hostin D."/>
            <person name="Houston K.A."/>
            <person name="Howland T.J."/>
            <person name="Wei M.-H."/>
            <person name="Ibegwam C."/>
            <person name="Jalali M."/>
            <person name="Kalush F."/>
            <person name="Karpen G.H."/>
            <person name="Ke Z."/>
            <person name="Kennison J.A."/>
            <person name="Ketchum K.A."/>
            <person name="Kimmel B.E."/>
            <person name="Kodira C.D."/>
            <person name="Kraft C.L."/>
            <person name="Kravitz S."/>
            <person name="Kulp D."/>
            <person name="Lai Z."/>
            <person name="Lasko P."/>
            <person name="Lei Y."/>
            <person name="Levitsky A.A."/>
            <person name="Li J.H."/>
            <person name="Li Z."/>
            <person name="Liang Y."/>
            <person name="Lin X."/>
            <person name="Liu X."/>
            <person name="Mattei B."/>
            <person name="McIntosh T.C."/>
            <person name="McLeod M.P."/>
            <person name="McPherson D."/>
            <person name="Merkulov G."/>
            <person name="Milshina N.V."/>
            <person name="Mobarry C."/>
            <person name="Morris J."/>
            <person name="Moshrefi A."/>
            <person name="Mount S.M."/>
            <person name="Moy M."/>
            <person name="Murphy B."/>
            <person name="Murphy L."/>
            <person name="Muzny D.M."/>
            <person name="Nelson D.L."/>
            <person name="Nelson D.R."/>
            <person name="Nelson K.A."/>
            <person name="Nixon K."/>
            <person name="Nusskern D.R."/>
            <person name="Pacleb J.M."/>
            <person name="Palazzolo M."/>
            <person name="Pittman G.S."/>
            <person name="Pan S."/>
            <person name="Pollard J."/>
            <person name="Puri V."/>
            <person name="Reese M.G."/>
            <person name="Reinert K."/>
            <person name="Remington K."/>
            <person name="Saunders R.D.C."/>
            <person name="Scheeler F."/>
            <person name="Shen H."/>
            <person name="Shue B.C."/>
            <person name="Siden-Kiamos I."/>
            <person name="Simpson M."/>
            <person name="Skupski M.P."/>
            <person name="Smith T.J."/>
            <person name="Spier E."/>
            <person name="Spradling A.C."/>
            <person name="Stapleton M."/>
            <person name="Strong R."/>
            <person name="Sun E."/>
            <person name="Svirskas R."/>
            <person name="Tector C."/>
            <person name="Turner R."/>
            <person name="Venter E."/>
            <person name="Wang A.H."/>
            <person name="Wang X."/>
            <person name="Wang Z.-Y."/>
            <person name="Wassarman D.A."/>
            <person name="Weinstock G.M."/>
            <person name="Weissenbach J."/>
            <person name="Williams S.M."/>
            <person name="Woodage T."/>
            <person name="Worley K.C."/>
            <person name="Wu D."/>
            <person name="Yang S."/>
            <person name="Yao Q.A."/>
            <person name="Ye J."/>
            <person name="Yeh R.-F."/>
            <person name="Zaveri J.S."/>
            <person name="Zhan M."/>
            <person name="Zhang G."/>
            <person name="Zhao Q."/>
            <person name="Zheng L."/>
            <person name="Zheng X.H."/>
            <person name="Zhong F.N."/>
            <person name="Zhong W."/>
            <person name="Zhou X."/>
            <person name="Zhu S.C."/>
            <person name="Zhu X."/>
            <person name="Smith H.O."/>
            <person name="Gibbs R.A."/>
            <person name="Myers E.W."/>
            <person name="Rubin G.M."/>
            <person name="Venter J.C."/>
        </authorList>
    </citation>
    <scope>NUCLEOTIDE SEQUENCE [LARGE SCALE GENOMIC DNA]</scope>
    <source>
        <strain>Berkeley</strain>
    </source>
</reference>
<reference key="4">
    <citation type="journal article" date="2002" name="Genome Biol.">
        <title>Annotation of the Drosophila melanogaster euchromatic genome: a systematic review.</title>
        <authorList>
            <person name="Misra S."/>
            <person name="Crosby M.A."/>
            <person name="Mungall C.J."/>
            <person name="Matthews B.B."/>
            <person name="Campbell K.S."/>
            <person name="Hradecky P."/>
            <person name="Huang Y."/>
            <person name="Kaminker J.S."/>
            <person name="Millburn G.H."/>
            <person name="Prochnik S.E."/>
            <person name="Smith C.D."/>
            <person name="Tupy J.L."/>
            <person name="Whitfield E.J."/>
            <person name="Bayraktaroglu L."/>
            <person name="Berman B.P."/>
            <person name="Bettencourt B.R."/>
            <person name="Celniker S.E."/>
            <person name="de Grey A.D.N.J."/>
            <person name="Drysdale R.A."/>
            <person name="Harris N.L."/>
            <person name="Richter J."/>
            <person name="Russo S."/>
            <person name="Schroeder A.J."/>
            <person name="Shu S.Q."/>
            <person name="Stapleton M."/>
            <person name="Yamada C."/>
            <person name="Ashburner M."/>
            <person name="Gelbart W.M."/>
            <person name="Rubin G.M."/>
            <person name="Lewis S.E."/>
        </authorList>
    </citation>
    <scope>GENOME REANNOTATION</scope>
    <scope>ALTERNATIVE SPLICING</scope>
    <source>
        <strain>Berkeley</strain>
    </source>
</reference>
<reference key="5">
    <citation type="journal article" date="2002" name="Genome Biol.">
        <title>A Drosophila full-length cDNA resource.</title>
        <authorList>
            <person name="Stapleton M."/>
            <person name="Carlson J.W."/>
            <person name="Brokstein P."/>
            <person name="Yu C."/>
            <person name="Champe M."/>
            <person name="George R.A."/>
            <person name="Guarin H."/>
            <person name="Kronmiller B."/>
            <person name="Pacleb J.M."/>
            <person name="Park S."/>
            <person name="Wan K.H."/>
            <person name="Rubin G.M."/>
            <person name="Celniker S.E."/>
        </authorList>
    </citation>
    <scope>NUCLEOTIDE SEQUENCE [LARGE SCALE MRNA] (ISOFORM 11.6)</scope>
    <source>
        <strain>Berkeley</strain>
        <tissue>Embryo</tissue>
    </source>
</reference>
<reference key="6">
    <citation type="journal article" date="1998" name="Mech. Dev.">
        <title>Proteolytic processing of the Drosophila Spatzle protein by easter generates a dimeric NGF-like molecule with ventralising activity.</title>
        <authorList>
            <person name="DeLotto Y."/>
            <person name="DeLotto R."/>
        </authorList>
    </citation>
    <scope>PROTEIN SEQUENCE OF 26-30 AND 221-226 (ISOFORM 8.19)</scope>
    <scope>SUBUNIT</scope>
    <scope>CLEAVAGE BY EA</scope>
    <scope>DISULFIDE BONDS</scope>
    <scope>MUTAGENESIS OF CYS-318</scope>
</reference>
<reference key="7">
    <citation type="journal article" date="1996" name="Cell">
        <title>The dorsoventral regulatory gene cassette spatzle/Toll/cactus controls the potent antifungal response in Drosophila adults.</title>
        <authorList>
            <person name="Lemaitre B."/>
            <person name="Nicolas E."/>
            <person name="Michaut L."/>
            <person name="Reichhart J.-M."/>
            <person name="Hoffmann J.A."/>
        </authorList>
    </citation>
    <scope>FUNCTION</scope>
    <scope>SUBCELLULAR LOCATION</scope>
</reference>
<reference key="8">
    <citation type="journal article" date="2003" name="Nat. Immunol.">
        <title>Binding of the Drosophila cytokine Spatzle to Toll is direct and establishes signaling.</title>
        <authorList>
            <person name="Weber A.N."/>
            <person name="Tauszig-Delamasure S."/>
            <person name="Hoffmann J.A."/>
            <person name="Lelievre E."/>
            <person name="Gascan H."/>
            <person name="Ray K.P."/>
            <person name="Morse M.A."/>
            <person name="Imler J.L."/>
            <person name="Gay N.J."/>
        </authorList>
    </citation>
    <scope>FUNCTION</scope>
    <scope>SUBCELLULAR LOCATION</scope>
    <scope>SUBUNIT</scope>
    <scope>INTERACTION WITH TL</scope>
</reference>
<reference key="9">
    <citation type="journal article" date="2006" name="Dev. Cell">
        <title>A Spatzle-processing enzyme required for toll signaling activation in Drosophila innate immunity.</title>
        <authorList>
            <person name="Jang I.H."/>
            <person name="Chosa N."/>
            <person name="Kim S.H."/>
            <person name="Nam H.J."/>
            <person name="Lemaitre B."/>
            <person name="Ochiai M."/>
            <person name="Kambris Z."/>
            <person name="Brun S."/>
            <person name="Hashimoto C."/>
            <person name="Ashida M."/>
            <person name="Brey P.T."/>
            <person name="Lee W.J."/>
        </authorList>
    </citation>
    <scope>CLEAVAGE BY SPE</scope>
    <scope>MUTAGENESIS OF 220-ARG-VAL-221</scope>
</reference>
<reference key="10">
    <citation type="journal article" date="2008" name="J. Biol. Chem.">
        <title>Biophysical characterization of refolded Drosophila Spatzle, a cystine knot protein, reveals distinct properties of three isoforms.</title>
        <authorList>
            <person name="Hoffmann A."/>
            <person name="Funkner A."/>
            <person name="Neumann P."/>
            <person name="Juhnke S."/>
            <person name="Walther M."/>
            <person name="Schierhorn A."/>
            <person name="Weininger U."/>
            <person name="Balbach J."/>
            <person name="Reuter G."/>
            <person name="Stubbs M.T."/>
        </authorList>
    </citation>
    <scope>X-RAY CRYSTALLOGRAPHY (2.40 ANGSTROMS) OF 221-326</scope>
    <scope>DISULFIDE BONDS</scope>
</reference>
<reference key="11">
    <citation type="journal article" date="2013" name="Proc. Natl. Acad. Sci. U.S.A.">
        <title>Cytokine Spatzle binds to the Drosophila immunoreceptor Toll with a neurotrophin-like specificity and couples receptor activation.</title>
        <authorList>
            <person name="Lewis M."/>
            <person name="Arnot C.J."/>
            <person name="Beeston H."/>
            <person name="McCoy A."/>
            <person name="Ashcroft A.E."/>
            <person name="Gay N.J."/>
            <person name="Gangloff M."/>
        </authorList>
    </citation>
    <scope>X-RAY CRYSTALLOGRAPHY (2.35 ANGSTROMS) OF 221-326</scope>
    <scope>SUBUNIT</scope>
    <scope>MUTAGENESIS OF 234-ARG-LYS-235 AND ASP-275</scope>
</reference>
<reference key="12">
    <citation type="journal article" date="2014" name="Proc. Natl. Acad. Sci. U.S.A.">
        <title>Structure of the Toll-Spatzle complex, a molecular hub in Drosophila development and innate immunity.</title>
        <authorList>
            <person name="Parthier C."/>
            <person name="Stelter M."/>
            <person name="Ursel C."/>
            <person name="Fandrich U."/>
            <person name="Lilie H."/>
            <person name="Breithaupt C."/>
            <person name="Stubbs M.T."/>
        </authorList>
    </citation>
    <scope>X-RAY CRYSTALLOGRAPHY (2.20 ANGSTROMS) OF 221-326</scope>
    <scope>SUBUNIT</scope>
</reference>
<reference key="13">
    <citation type="journal article" date="2010" name="Curr. Biol.">
        <title>Pipe-dependent ventral processing of Easter by Snake is the defining step in Drosophila embryo DV axis formation.</title>
        <authorList>
            <person name="Cho Y.S."/>
            <person name="Stevens L.M."/>
            <person name="Stein D."/>
        </authorList>
    </citation>
    <scope>CLEAVAGE BY EA</scope>
</reference>
<protein>
    <recommendedName>
        <fullName evidence="18">Protein spaetzle</fullName>
    </recommendedName>
    <alternativeName>
        <fullName evidence="18">Protein spatzle</fullName>
    </alternativeName>
    <component>
        <recommendedName>
            <fullName>Protein spaetzle C-106</fullName>
        </recommendedName>
    </component>
</protein>